<protein>
    <recommendedName>
        <fullName evidence="1">Large ribosomal subunit protein bL36</fullName>
    </recommendedName>
    <alternativeName>
        <fullName evidence="2">50S ribosomal protein L36</fullName>
    </alternativeName>
</protein>
<reference key="1">
    <citation type="journal article" date="2003" name="Mol. Microbiol.">
        <title>Genome-based analysis of virulence genes in a non-biofilm-forming Staphylococcus epidermidis strain (ATCC 12228).</title>
        <authorList>
            <person name="Zhang Y.-Q."/>
            <person name="Ren S.-X."/>
            <person name="Li H.-L."/>
            <person name="Wang Y.-X."/>
            <person name="Fu G."/>
            <person name="Yang J."/>
            <person name="Qin Z.-Q."/>
            <person name="Miao Y.-G."/>
            <person name="Wang W.-Y."/>
            <person name="Chen R.-S."/>
            <person name="Shen Y."/>
            <person name="Chen Z."/>
            <person name="Yuan Z.-H."/>
            <person name="Zhao G.-P."/>
            <person name="Qu D."/>
            <person name="Danchin A."/>
            <person name="Wen Y.-M."/>
        </authorList>
    </citation>
    <scope>NUCLEOTIDE SEQUENCE [LARGE SCALE GENOMIC DNA]</scope>
    <source>
        <strain>ATCC 12228 / FDA PCI 1200</strain>
    </source>
</reference>
<organism>
    <name type="scientific">Staphylococcus epidermidis (strain ATCC 12228 / FDA PCI 1200)</name>
    <dbReference type="NCBI Taxonomy" id="176280"/>
    <lineage>
        <taxon>Bacteria</taxon>
        <taxon>Bacillati</taxon>
        <taxon>Bacillota</taxon>
        <taxon>Bacilli</taxon>
        <taxon>Bacillales</taxon>
        <taxon>Staphylococcaceae</taxon>
        <taxon>Staphylococcus</taxon>
    </lineage>
</organism>
<dbReference type="EMBL" id="AE015929">
    <property type="protein sequence ID" value="AAO05441.1"/>
    <property type="molecule type" value="Genomic_DNA"/>
</dbReference>
<dbReference type="RefSeq" id="NP_765355.1">
    <property type="nucleotide sequence ID" value="NC_004461.1"/>
</dbReference>
<dbReference type="RefSeq" id="WP_001829709.1">
    <property type="nucleotide sequence ID" value="NZ_WBME01000007.1"/>
</dbReference>
<dbReference type="SMR" id="Q8CRI2"/>
<dbReference type="GeneID" id="93780214"/>
<dbReference type="KEGG" id="sep:SE_1800"/>
<dbReference type="PATRIC" id="fig|176280.10.peg.1757"/>
<dbReference type="eggNOG" id="COG0257">
    <property type="taxonomic scope" value="Bacteria"/>
</dbReference>
<dbReference type="HOGENOM" id="CLU_135723_6_2_9"/>
<dbReference type="OrthoDB" id="9802520at2"/>
<dbReference type="PRO" id="PR:Q8CRI2"/>
<dbReference type="Proteomes" id="UP000001411">
    <property type="component" value="Chromosome"/>
</dbReference>
<dbReference type="GO" id="GO:0005737">
    <property type="term" value="C:cytoplasm"/>
    <property type="evidence" value="ECO:0007669"/>
    <property type="project" value="UniProtKB-ARBA"/>
</dbReference>
<dbReference type="GO" id="GO:1990904">
    <property type="term" value="C:ribonucleoprotein complex"/>
    <property type="evidence" value="ECO:0007669"/>
    <property type="project" value="UniProtKB-KW"/>
</dbReference>
<dbReference type="GO" id="GO:0005840">
    <property type="term" value="C:ribosome"/>
    <property type="evidence" value="ECO:0007669"/>
    <property type="project" value="UniProtKB-KW"/>
</dbReference>
<dbReference type="GO" id="GO:0003735">
    <property type="term" value="F:structural constituent of ribosome"/>
    <property type="evidence" value="ECO:0007669"/>
    <property type="project" value="InterPro"/>
</dbReference>
<dbReference type="GO" id="GO:0006412">
    <property type="term" value="P:translation"/>
    <property type="evidence" value="ECO:0007669"/>
    <property type="project" value="UniProtKB-UniRule"/>
</dbReference>
<dbReference type="HAMAP" id="MF_00251">
    <property type="entry name" value="Ribosomal_bL36"/>
    <property type="match status" value="1"/>
</dbReference>
<dbReference type="InterPro" id="IPR000473">
    <property type="entry name" value="Ribosomal_bL36"/>
</dbReference>
<dbReference type="InterPro" id="IPR035977">
    <property type="entry name" value="Ribosomal_bL36_sp"/>
</dbReference>
<dbReference type="NCBIfam" id="TIGR01022">
    <property type="entry name" value="rpmJ_bact"/>
    <property type="match status" value="1"/>
</dbReference>
<dbReference type="PANTHER" id="PTHR42888">
    <property type="entry name" value="50S RIBOSOMAL PROTEIN L36, CHLOROPLASTIC"/>
    <property type="match status" value="1"/>
</dbReference>
<dbReference type="PANTHER" id="PTHR42888:SF1">
    <property type="entry name" value="LARGE RIBOSOMAL SUBUNIT PROTEIN BL36C"/>
    <property type="match status" value="1"/>
</dbReference>
<dbReference type="Pfam" id="PF00444">
    <property type="entry name" value="Ribosomal_L36"/>
    <property type="match status" value="1"/>
</dbReference>
<dbReference type="SUPFAM" id="SSF57840">
    <property type="entry name" value="Ribosomal protein L36"/>
    <property type="match status" value="1"/>
</dbReference>
<dbReference type="PROSITE" id="PS00828">
    <property type="entry name" value="RIBOSOMAL_L36"/>
    <property type="match status" value="1"/>
</dbReference>
<name>RL36_STAES</name>
<gene>
    <name evidence="1" type="primary">rpmJ</name>
    <name type="ordered locus">SE_1800</name>
</gene>
<keyword id="KW-0687">Ribonucleoprotein</keyword>
<keyword id="KW-0689">Ribosomal protein</keyword>
<proteinExistence type="inferred from homology"/>
<accession>Q8CRI2</accession>
<comment type="similarity">
    <text evidence="1">Belongs to the bacterial ribosomal protein bL36 family.</text>
</comment>
<feature type="chain" id="PRO_0000126263" description="Large ribosomal subunit protein bL36">
    <location>
        <begin position="1"/>
        <end position="37"/>
    </location>
</feature>
<evidence type="ECO:0000255" key="1">
    <source>
        <dbReference type="HAMAP-Rule" id="MF_00251"/>
    </source>
</evidence>
<evidence type="ECO:0000305" key="2"/>
<sequence length="37" mass="4291">MKVRPSVKPICEKCKVIKRKGKVMVICDNPKHKQRQG</sequence>